<evidence type="ECO:0000250" key="1">
    <source>
        <dbReference type="UniProtKB" id="Q5KS41"/>
    </source>
</evidence>
<evidence type="ECO:0000255" key="2"/>
<evidence type="ECO:0000269" key="3">
    <source>
    </source>
</evidence>
<evidence type="ECO:0000269" key="4">
    <source>
    </source>
</evidence>
<evidence type="ECO:0000269" key="5">
    <source>
    </source>
</evidence>
<evidence type="ECO:0000303" key="6">
    <source>
    </source>
</evidence>
<evidence type="ECO:0000305" key="7"/>
<evidence type="ECO:0000312" key="8">
    <source>
        <dbReference type="Araport" id="AT5G37300"/>
    </source>
</evidence>
<evidence type="ECO:0000312" key="9">
    <source>
        <dbReference type="EMBL" id="BAB09102.1"/>
    </source>
</evidence>
<proteinExistence type="evidence at protein level"/>
<protein>
    <recommendedName>
        <fullName evidence="6">Wax ester synthase/diacylglycerol acyltransferase 1</fullName>
        <shortName evidence="6">WS/DGAT 1</shortName>
    </recommendedName>
    <alternativeName>
        <fullName evidence="6">Diacylglycerol O-acyltransferase</fullName>
        <shortName evidence="6">DGAT</shortName>
        <ecNumber evidence="4">2.3.1.20</ecNumber>
    </alternativeName>
    <alternativeName>
        <fullName evidence="6">Long-chain-alcohol O-fatty-acyltransferase</fullName>
        <ecNumber evidence="4">2.3.1.75</ecNumber>
    </alternativeName>
    <alternativeName>
        <fullName evidence="6">O-acyltransferase WSD1</fullName>
    </alternativeName>
    <alternativeName>
        <fullName evidence="6">Wax synthase</fullName>
        <shortName evidence="6">WS</shortName>
    </alternativeName>
</protein>
<dbReference type="EC" id="2.3.1.20" evidence="4"/>
<dbReference type="EC" id="2.3.1.75" evidence="4"/>
<dbReference type="EMBL" id="AB017069">
    <property type="protein sequence ID" value="BAB09102.1"/>
    <property type="status" value="ALT_INIT"/>
    <property type="molecule type" value="Genomic_DNA"/>
</dbReference>
<dbReference type="EMBL" id="CP002688">
    <property type="protein sequence ID" value="AED94163.1"/>
    <property type="molecule type" value="Genomic_DNA"/>
</dbReference>
<dbReference type="EMBL" id="AY056316">
    <property type="protein sequence ID" value="AAL07165.1"/>
    <property type="molecule type" value="mRNA"/>
</dbReference>
<dbReference type="EMBL" id="BT015776">
    <property type="protein sequence ID" value="AAU90066.1"/>
    <property type="molecule type" value="mRNA"/>
</dbReference>
<dbReference type="RefSeq" id="NP_001331809.1">
    <property type="nucleotide sequence ID" value="NM_001344180.1"/>
</dbReference>
<dbReference type="RefSeq" id="NP_568547.1">
    <property type="nucleotide sequence ID" value="NM_123089.3"/>
</dbReference>
<dbReference type="SMR" id="Q93ZR6"/>
<dbReference type="FunCoup" id="Q93ZR6">
    <property type="interactions" value="1"/>
</dbReference>
<dbReference type="STRING" id="3702.Q93ZR6"/>
<dbReference type="iPTMnet" id="Q93ZR6"/>
<dbReference type="PaxDb" id="3702-AT5G37300.1"/>
<dbReference type="ProteomicsDB" id="242660"/>
<dbReference type="EnsemblPlants" id="AT5G37300.1">
    <property type="protein sequence ID" value="AT5G37300.1"/>
    <property type="gene ID" value="AT5G37300"/>
</dbReference>
<dbReference type="GeneID" id="833704"/>
<dbReference type="Gramene" id="AT5G37300.1">
    <property type="protein sequence ID" value="AT5G37300.1"/>
    <property type="gene ID" value="AT5G37300"/>
</dbReference>
<dbReference type="KEGG" id="ath:AT5G37300"/>
<dbReference type="Araport" id="AT5G37300"/>
<dbReference type="TAIR" id="AT5G37300">
    <property type="gene designation" value="WSD1"/>
</dbReference>
<dbReference type="eggNOG" id="ENOG502QTZ2">
    <property type="taxonomic scope" value="Eukaryota"/>
</dbReference>
<dbReference type="HOGENOM" id="CLU_027831_0_0_1"/>
<dbReference type="InParanoid" id="Q93ZR6"/>
<dbReference type="PhylomeDB" id="Q93ZR6"/>
<dbReference type="BioCyc" id="ARA:AT5G37300-MONOMER"/>
<dbReference type="BRENDA" id="2.3.1.20">
    <property type="organism ID" value="399"/>
</dbReference>
<dbReference type="UniPathway" id="UPA00282"/>
<dbReference type="PRO" id="PR:Q93ZR6"/>
<dbReference type="Proteomes" id="UP000006548">
    <property type="component" value="Chromosome 5"/>
</dbReference>
<dbReference type="ExpressionAtlas" id="Q93ZR6">
    <property type="expression patterns" value="baseline and differential"/>
</dbReference>
<dbReference type="GO" id="GO:0005783">
    <property type="term" value="C:endoplasmic reticulum"/>
    <property type="evidence" value="ECO:0000314"/>
    <property type="project" value="TAIR"/>
</dbReference>
<dbReference type="GO" id="GO:0005789">
    <property type="term" value="C:endoplasmic reticulum membrane"/>
    <property type="evidence" value="ECO:0007669"/>
    <property type="project" value="UniProtKB-SubCell"/>
</dbReference>
<dbReference type="GO" id="GO:0005886">
    <property type="term" value="C:plasma membrane"/>
    <property type="evidence" value="ECO:0007669"/>
    <property type="project" value="UniProtKB-SubCell"/>
</dbReference>
<dbReference type="GO" id="GO:0004144">
    <property type="term" value="F:diacylglycerol O-acyltransferase activity"/>
    <property type="evidence" value="ECO:0000314"/>
    <property type="project" value="TAIR"/>
</dbReference>
<dbReference type="GO" id="GO:0004467">
    <property type="term" value="F:long-chain fatty acid-CoA ligase activity"/>
    <property type="evidence" value="ECO:0000315"/>
    <property type="project" value="UniProtKB"/>
</dbReference>
<dbReference type="GO" id="GO:0047196">
    <property type="term" value="F:long-chain-alcohol O-fatty-acyltransferase activity"/>
    <property type="evidence" value="ECO:0000314"/>
    <property type="project" value="TAIR"/>
</dbReference>
<dbReference type="GO" id="GO:0009737">
    <property type="term" value="P:response to abscisic acid"/>
    <property type="evidence" value="ECO:0000270"/>
    <property type="project" value="UniProtKB"/>
</dbReference>
<dbReference type="GO" id="GO:0009651">
    <property type="term" value="P:response to salt stress"/>
    <property type="evidence" value="ECO:0000270"/>
    <property type="project" value="UniProtKB"/>
</dbReference>
<dbReference type="GO" id="GO:0009414">
    <property type="term" value="P:response to water deprivation"/>
    <property type="evidence" value="ECO:0000315"/>
    <property type="project" value="UniProtKB"/>
</dbReference>
<dbReference type="GO" id="GO:0019432">
    <property type="term" value="P:triglyceride biosynthetic process"/>
    <property type="evidence" value="ECO:0007669"/>
    <property type="project" value="UniProtKB-UniPathway"/>
</dbReference>
<dbReference type="GO" id="GO:0010025">
    <property type="term" value="P:wax biosynthetic process"/>
    <property type="evidence" value="ECO:0000315"/>
    <property type="project" value="UniProtKB"/>
</dbReference>
<dbReference type="InterPro" id="IPR045034">
    <property type="entry name" value="O-acyltransferase_WSD1-like"/>
</dbReference>
<dbReference type="InterPro" id="IPR009721">
    <property type="entry name" value="O-acyltransferase_WSD1_C"/>
</dbReference>
<dbReference type="InterPro" id="IPR004255">
    <property type="entry name" value="O-acyltransferase_WSD1_N"/>
</dbReference>
<dbReference type="PANTHER" id="PTHR31650">
    <property type="entry name" value="O-ACYLTRANSFERASE (WSD1-LIKE) FAMILY PROTEIN"/>
    <property type="match status" value="1"/>
</dbReference>
<dbReference type="PANTHER" id="PTHR31650:SF30">
    <property type="entry name" value="WAX ESTER SYNTHASE_DIACYLGLYCEROL ACYLTRANSFERASE 1"/>
    <property type="match status" value="1"/>
</dbReference>
<dbReference type="Pfam" id="PF06974">
    <property type="entry name" value="WS_DGAT_C"/>
    <property type="match status" value="1"/>
</dbReference>
<dbReference type="Pfam" id="PF03007">
    <property type="entry name" value="WS_DGAT_cat"/>
    <property type="match status" value="1"/>
</dbReference>
<dbReference type="SUPFAM" id="SSF52777">
    <property type="entry name" value="CoA-dependent acyltransferases"/>
    <property type="match status" value="1"/>
</dbReference>
<organism>
    <name type="scientific">Arabidopsis thaliana</name>
    <name type="common">Mouse-ear cress</name>
    <dbReference type="NCBI Taxonomy" id="3702"/>
    <lineage>
        <taxon>Eukaryota</taxon>
        <taxon>Viridiplantae</taxon>
        <taxon>Streptophyta</taxon>
        <taxon>Embryophyta</taxon>
        <taxon>Tracheophyta</taxon>
        <taxon>Spermatophyta</taxon>
        <taxon>Magnoliopsida</taxon>
        <taxon>eudicotyledons</taxon>
        <taxon>Gunneridae</taxon>
        <taxon>Pentapetalae</taxon>
        <taxon>rosids</taxon>
        <taxon>malvids</taxon>
        <taxon>Brassicales</taxon>
        <taxon>Brassicaceae</taxon>
        <taxon>Camelineae</taxon>
        <taxon>Arabidopsis</taxon>
    </lineage>
</organism>
<sequence length="481" mass="54417">MKAEKVMEREIETTPIEPLSPMSHMLSSPNFFIVITFGFKTRCNRSAFVDGINNTLINAPRFSSKMEINYKKKGEPVWIPVKLRVDDHIIVPDLEYSNIQNPDQFVEDYTSNIANIPMDMSKPLWEFHLLNMKTSKAESLAIVKIHHSIGDGMSLMSLLLACSRKISDPDALVSNTTATKKPADSMAWWLFVGFWFMIRVTFTTIVEFSKLMLTVCFLEDTKNPLMGNPSDGFQSWKVVHRIISFEDVKLIKDTMNMKVNDVLLGMTQAGLSRYLSSKYDGSTAEKKKILEKLRVRGAVAINLRPATKIEDLADMMAKGSKCRWGNFIGTVIFPLWVKSEKDPLEYIRRAKATMDRKKISLEAFFFYGIIKFTLKFFGGKAVEAFGKRIFGHTSLAFSNVKGPDEEISFFHHPISYIAGSALVGAQALNIHFISYVDKIVINLAVDTTTIQDPNRLCDDMVEALEIIKSATQGEIFHKTEV</sequence>
<gene>
    <name evidence="6" type="primary">WSD1</name>
    <name evidence="8" type="ordered locus">At5g37300</name>
    <name evidence="9" type="ORF">MNJ8.9</name>
</gene>
<accession>Q93ZR6</accession>
<accession>Q9FHT5</accession>
<reference key="1">
    <citation type="submission" date="1998-08" db="EMBL/GenBank/DDBJ databases">
        <title>Structural analysis of Arabidopsis thaliana chromosome 5. XI.</title>
        <authorList>
            <person name="Kaneko T."/>
            <person name="Katoh T."/>
            <person name="Asamizu E."/>
            <person name="Sato S."/>
            <person name="Nakamura Y."/>
            <person name="Kotani H."/>
            <person name="Tabata S."/>
        </authorList>
    </citation>
    <scope>NUCLEOTIDE SEQUENCE [LARGE SCALE GENOMIC DNA]</scope>
    <source>
        <strain>cv. Columbia</strain>
    </source>
</reference>
<reference key="2">
    <citation type="journal article" date="2017" name="Plant J.">
        <title>Araport11: a complete reannotation of the Arabidopsis thaliana reference genome.</title>
        <authorList>
            <person name="Cheng C.Y."/>
            <person name="Krishnakumar V."/>
            <person name="Chan A.P."/>
            <person name="Thibaud-Nissen F."/>
            <person name="Schobel S."/>
            <person name="Town C.D."/>
        </authorList>
    </citation>
    <scope>GENOME REANNOTATION</scope>
    <source>
        <strain>cv. Columbia</strain>
    </source>
</reference>
<reference key="3">
    <citation type="journal article" date="2003" name="Science">
        <title>Empirical analysis of transcriptional activity in the Arabidopsis genome.</title>
        <authorList>
            <person name="Yamada K."/>
            <person name="Lim J."/>
            <person name="Dale J.M."/>
            <person name="Chen H."/>
            <person name="Shinn P."/>
            <person name="Palm C.J."/>
            <person name="Southwick A.M."/>
            <person name="Wu H.C."/>
            <person name="Kim C.J."/>
            <person name="Nguyen M."/>
            <person name="Pham P.K."/>
            <person name="Cheuk R.F."/>
            <person name="Karlin-Newmann G."/>
            <person name="Liu S.X."/>
            <person name="Lam B."/>
            <person name="Sakano H."/>
            <person name="Wu T."/>
            <person name="Yu G."/>
            <person name="Miranda M."/>
            <person name="Quach H.L."/>
            <person name="Tripp M."/>
            <person name="Chang C.H."/>
            <person name="Lee J.M."/>
            <person name="Toriumi M.J."/>
            <person name="Chan M.M."/>
            <person name="Tang C.C."/>
            <person name="Onodera C.S."/>
            <person name="Deng J.M."/>
            <person name="Akiyama K."/>
            <person name="Ansari Y."/>
            <person name="Arakawa T."/>
            <person name="Banh J."/>
            <person name="Banno F."/>
            <person name="Bowser L."/>
            <person name="Brooks S.Y."/>
            <person name="Carninci P."/>
            <person name="Chao Q."/>
            <person name="Choy N."/>
            <person name="Enju A."/>
            <person name="Goldsmith A.D."/>
            <person name="Gurjal M."/>
            <person name="Hansen N.F."/>
            <person name="Hayashizaki Y."/>
            <person name="Johnson-Hopson C."/>
            <person name="Hsuan V.W."/>
            <person name="Iida K."/>
            <person name="Karnes M."/>
            <person name="Khan S."/>
            <person name="Koesema E."/>
            <person name="Ishida J."/>
            <person name="Jiang P.X."/>
            <person name="Jones T."/>
            <person name="Kawai J."/>
            <person name="Kamiya A."/>
            <person name="Meyers C."/>
            <person name="Nakajima M."/>
            <person name="Narusaka M."/>
            <person name="Seki M."/>
            <person name="Sakurai T."/>
            <person name="Satou M."/>
            <person name="Tamse R."/>
            <person name="Vaysberg M."/>
            <person name="Wallender E.K."/>
            <person name="Wong C."/>
            <person name="Yamamura Y."/>
            <person name="Yuan S."/>
            <person name="Shinozaki K."/>
            <person name="Davis R.W."/>
            <person name="Theologis A."/>
            <person name="Ecker J.R."/>
        </authorList>
    </citation>
    <scope>NUCLEOTIDE SEQUENCE [LARGE SCALE MRNA]</scope>
    <source>
        <strain>cv. Columbia</strain>
    </source>
</reference>
<reference key="4">
    <citation type="submission" date="2004-10" db="EMBL/GenBank/DDBJ databases">
        <title>Arabidopsis ORF clones.</title>
        <authorList>
            <person name="Shinn P."/>
            <person name="Chen H."/>
            <person name="Cheuk R.F."/>
            <person name="Kim C.J."/>
            <person name="Ecker J.R."/>
        </authorList>
    </citation>
    <scope>NUCLEOTIDE SEQUENCE [LARGE SCALE MRNA]</scope>
    <source>
        <strain>cv. Columbia</strain>
    </source>
</reference>
<reference key="5">
    <citation type="journal article" date="2005" name="Plant Physiol.">
        <title>Cuticular lipid composition, surface structure, and gene expression in Arabidopsis stem epidermis.</title>
        <authorList>
            <person name="Suh M.C."/>
            <person name="Samuels A.L."/>
            <person name="Jetter R."/>
            <person name="Kunst L."/>
            <person name="Pollard M."/>
            <person name="Ohlrogge J."/>
            <person name="Beisson F."/>
        </authorList>
    </citation>
    <scope>INDUCTION</scope>
</reference>
<reference key="6">
    <citation type="journal article" date="2008" name="Plant Physiol.">
        <title>Identification of the wax ester synthase/acyl-coenzyme A: diacylglycerol acyltransferase WSD1 required for stem wax ester biosynthesis in Arabidopsis.</title>
        <authorList>
            <person name="Li F."/>
            <person name="Wu X."/>
            <person name="Lam P."/>
            <person name="Bird D."/>
            <person name="Zheng H."/>
            <person name="Samuels A.L."/>
            <person name="Jetter R."/>
            <person name="Kunst L."/>
        </authorList>
    </citation>
    <scope>FUNCTION</scope>
    <scope>DISRUPTION PHENOTYPE</scope>
    <scope>CATALYTIC ACTIVITY</scope>
    <scope>SUBCELLULAR LOCATION</scope>
    <scope>TISSUE SPECIFICITY</scope>
    <scope>PATHWAY</scope>
    <scope>GENE FAMILY</scope>
    <scope>NOMENCLATURE</scope>
</reference>
<reference key="7">
    <citation type="journal article" date="2013" name="Arabidopsis Book">
        <title>Acyl-lipid metabolism.</title>
        <authorList>
            <person name="Li-Beisson Y."/>
            <person name="Shorrosh B."/>
            <person name="Beisson F."/>
            <person name="Andersson M.X."/>
            <person name="Arondel V."/>
            <person name="Bates P.D."/>
            <person name="Baud S."/>
            <person name="Bird D."/>
            <person name="Debono A."/>
            <person name="Durrett T.P."/>
            <person name="Franke R.B."/>
            <person name="Graham I.A."/>
            <person name="Katayama K."/>
            <person name="Kelly A.A."/>
            <person name="Larson T."/>
            <person name="Markham J.E."/>
            <person name="Miquel M."/>
            <person name="Molina I."/>
            <person name="Nishida I."/>
            <person name="Rowland O."/>
            <person name="Samuels L."/>
            <person name="Schmid K.M."/>
            <person name="Wada H."/>
            <person name="Welti R."/>
            <person name="Xu C."/>
            <person name="Zallot R."/>
            <person name="Ohlrogge J."/>
        </authorList>
    </citation>
    <scope>REVIEW ON ACYL-LIPID METABOLISM</scope>
</reference>
<reference key="8">
    <citation type="journal article" date="2019" name="Plant J.">
        <title>Surface wax esters contribute to drought tolerance in Arabidopsis.</title>
        <authorList>
            <person name="Patwari P."/>
            <person name="Salewski V."/>
            <person name="Gutbrod K."/>
            <person name="Kreszies T."/>
            <person name="Dresen-Scholz B."/>
            <person name="Peisker H."/>
            <person name="Steiner U."/>
            <person name="Meyer A.J."/>
            <person name="Schreiber L."/>
            <person name="Doermann P."/>
        </authorList>
    </citation>
    <scope>FUNCTION</scope>
    <scope>DISRUPTION PHENOTYPE</scope>
    <scope>INDUCTION BY DROUGHT; SALT AND ABSCISIC ACID</scope>
    <scope>TISSUE SPECIFICITY</scope>
    <source>
        <strain>cv. Columbia</strain>
    </source>
</reference>
<name>WSD1_ARATH</name>
<feature type="chain" id="PRO_0000378331" description="Wax ester synthase/diacylglycerol acyltransferase 1">
    <location>
        <begin position="1"/>
        <end position="481"/>
    </location>
</feature>
<feature type="topological domain" description="Cytoplasmic" evidence="7">
    <location>
        <begin position="1"/>
        <end position="185"/>
    </location>
</feature>
<feature type="transmembrane region" description="Helical" evidence="2">
    <location>
        <begin position="186"/>
        <end position="206"/>
    </location>
</feature>
<feature type="topological domain" description="Lumenal" evidence="7">
    <location>
        <begin position="207"/>
        <end position="481"/>
    </location>
</feature>
<feature type="active site" description="Proton acceptor" evidence="2">
    <location>
        <position position="147"/>
    </location>
</feature>
<comment type="function">
    <text evidence="4 5">Bifunctional wax ester synthase/diacylglycerol acyltransferase (PubMed:18621978). Involved in cuticular wax biosynthesis (PubMed:18621978, PubMed:30729606). Required to reduce leaf water loss, especially during drought (PubMed:30729606).</text>
</comment>
<comment type="catalytic activity">
    <reaction evidence="4">
        <text>a long chain fatty alcohol + a fatty acyl-CoA = a wax ester + CoA</text>
        <dbReference type="Rhea" id="RHEA:38443"/>
        <dbReference type="ChEBI" id="CHEBI:10036"/>
        <dbReference type="ChEBI" id="CHEBI:17135"/>
        <dbReference type="ChEBI" id="CHEBI:57287"/>
        <dbReference type="ChEBI" id="CHEBI:77636"/>
        <dbReference type="EC" id="2.3.1.75"/>
    </reaction>
</comment>
<comment type="catalytic activity">
    <reaction evidence="4">
        <text>an acyl-CoA + a 1,2-diacyl-sn-glycerol = a triacyl-sn-glycerol + CoA</text>
        <dbReference type="Rhea" id="RHEA:10868"/>
        <dbReference type="ChEBI" id="CHEBI:17815"/>
        <dbReference type="ChEBI" id="CHEBI:57287"/>
        <dbReference type="ChEBI" id="CHEBI:58342"/>
        <dbReference type="ChEBI" id="CHEBI:64615"/>
        <dbReference type="EC" id="2.3.1.20"/>
    </reaction>
</comment>
<comment type="pathway">
    <text evidence="4">Glycerolipid metabolism; triacylglycerol biosynthesis.</text>
</comment>
<comment type="pathway">
    <text evidence="4">Lipid metabolism.</text>
</comment>
<comment type="subcellular location">
    <subcellularLocation>
        <location evidence="1">Cell membrane</location>
        <topology evidence="2">Single-pass membrane protein</topology>
    </subcellularLocation>
    <subcellularLocation>
        <location evidence="4">Endoplasmic reticulum membrane</location>
        <topology evidence="2">Single-pass membrane protein</topology>
    </subcellularLocation>
</comment>
<comment type="tissue specificity">
    <text evidence="4 5">Expressed in flowers, siliques, top parts of stems, and leaves (PubMed:18621978, PubMed:30729606). Not found in roots, seeds and young seedlings (PubMed:18621978).</text>
</comment>
<comment type="induction">
    <text evidence="3 5">Up-regulated in the stem epidermis during active wax synthesis (PubMed:16299169). Induced in roots during drought and salt stresses, and upon abscisic acid (ABA) treatment (PubMed:30729606).</text>
</comment>
<comment type="disruption phenotype">
    <text evidence="4 5">Severe reduction in wax alkyl esters (PubMed:18621978). Reduced wax ester coverage on leaves and stems during normal and drought conditions leading to compromised growth and relative water content due to an increased leaf water loss, especially during drought (PubMed:30729606).</text>
</comment>
<comment type="similarity">
    <text evidence="7">In the N-terminal section; belongs to the long-chain O-acyltransferase family.</text>
</comment>
<comment type="sequence caution" evidence="7">
    <conflict type="erroneous initiation">
        <sequence resource="EMBL-CDS" id="BAB09102"/>
    </conflict>
    <text>Extended N-terminus.</text>
</comment>
<keyword id="KW-0012">Acyltransferase</keyword>
<keyword id="KW-1003">Cell membrane</keyword>
<keyword id="KW-0256">Endoplasmic reticulum</keyword>
<keyword id="KW-0472">Membrane</keyword>
<keyword id="KW-1185">Reference proteome</keyword>
<keyword id="KW-0346">Stress response</keyword>
<keyword id="KW-0808">Transferase</keyword>
<keyword id="KW-0812">Transmembrane</keyword>
<keyword id="KW-1133">Transmembrane helix</keyword>